<evidence type="ECO:0000250" key="1">
    <source>
        <dbReference type="UniProtKB" id="D3Z4I3"/>
    </source>
</evidence>
<evidence type="ECO:0000250" key="2">
    <source>
        <dbReference type="UniProtKB" id="Q6GQD3"/>
    </source>
</evidence>
<evidence type="ECO:0000250" key="3">
    <source>
        <dbReference type="UniProtKB" id="Q9BX46"/>
    </source>
</evidence>
<evidence type="ECO:0000255" key="4">
    <source>
        <dbReference type="PROSITE-ProRule" id="PRU00176"/>
    </source>
</evidence>
<evidence type="ECO:0000305" key="5"/>
<organism>
    <name type="scientific">Xenopus tropicalis</name>
    <name type="common">Western clawed frog</name>
    <name type="synonym">Silurana tropicalis</name>
    <dbReference type="NCBI Taxonomy" id="8364"/>
    <lineage>
        <taxon>Eukaryota</taxon>
        <taxon>Metazoa</taxon>
        <taxon>Chordata</taxon>
        <taxon>Craniata</taxon>
        <taxon>Vertebrata</taxon>
        <taxon>Euteleostomi</taxon>
        <taxon>Amphibia</taxon>
        <taxon>Batrachia</taxon>
        <taxon>Anura</taxon>
        <taxon>Pipoidea</taxon>
        <taxon>Pipidae</taxon>
        <taxon>Xenopodinae</taxon>
        <taxon>Xenopus</taxon>
        <taxon>Silurana</taxon>
    </lineage>
</organism>
<reference key="1">
    <citation type="submission" date="2003-11" db="EMBL/GenBank/DDBJ databases">
        <authorList>
            <consortium name="NIH - Xenopus Gene Collection (XGC) project"/>
        </authorList>
    </citation>
    <scope>NUCLEOTIDE SEQUENCE [LARGE SCALE MRNA]</scope>
    <source>
        <tissue>Embryo</tissue>
    </source>
</reference>
<feature type="chain" id="PRO_0000273375" description="RNA-binding protein 24">
    <location>
        <begin position="1"/>
        <end position="226"/>
    </location>
</feature>
<feature type="domain" description="RRM" evidence="4">
    <location>
        <begin position="11"/>
        <end position="88"/>
    </location>
</feature>
<dbReference type="EMBL" id="BC061322">
    <property type="protein sequence ID" value="AAH61322.1"/>
    <property type="molecule type" value="mRNA"/>
</dbReference>
<dbReference type="RefSeq" id="NP_989016.1">
    <property type="nucleotide sequence ID" value="NM_203685.1"/>
</dbReference>
<dbReference type="SMR" id="Q6P8A7"/>
<dbReference type="FunCoup" id="Q6P8A7">
    <property type="interactions" value="2046"/>
</dbReference>
<dbReference type="STRING" id="8364.ENSXETP00000049758"/>
<dbReference type="PaxDb" id="8364-ENSXETP00000053069"/>
<dbReference type="DNASU" id="394612"/>
<dbReference type="GeneID" id="394612"/>
<dbReference type="KEGG" id="xtr:394612"/>
<dbReference type="AGR" id="Xenbase:XB-GENE-493647"/>
<dbReference type="CTD" id="221662"/>
<dbReference type="Xenbase" id="XB-GENE-493647">
    <property type="gene designation" value="rbm24"/>
</dbReference>
<dbReference type="eggNOG" id="KOG0149">
    <property type="taxonomic scope" value="Eukaryota"/>
</dbReference>
<dbReference type="HOGENOM" id="CLU_065652_0_1_1"/>
<dbReference type="InParanoid" id="Q6P8A7"/>
<dbReference type="OMA" id="IPAHYMY"/>
<dbReference type="OrthoDB" id="4207594at2759"/>
<dbReference type="PhylomeDB" id="Q6P8A7"/>
<dbReference type="Proteomes" id="UP000008143">
    <property type="component" value="Chromosome 6"/>
</dbReference>
<dbReference type="Bgee" id="ENSXETG00000024618">
    <property type="expression patterns" value="Expressed in skeletal muscle tissue and 16 other cell types or tissues"/>
</dbReference>
<dbReference type="ExpressionAtlas" id="Q6P8A7">
    <property type="expression patterns" value="differential"/>
</dbReference>
<dbReference type="GO" id="GO:0005737">
    <property type="term" value="C:cytoplasm"/>
    <property type="evidence" value="ECO:0000250"/>
    <property type="project" value="UniProtKB"/>
</dbReference>
<dbReference type="GO" id="GO:0005634">
    <property type="term" value="C:nucleus"/>
    <property type="evidence" value="ECO:0007669"/>
    <property type="project" value="UniProtKB-SubCell"/>
</dbReference>
<dbReference type="GO" id="GO:0035925">
    <property type="term" value="F:mRNA 3'-UTR AU-rich region binding"/>
    <property type="evidence" value="ECO:0000250"/>
    <property type="project" value="UniProtKB"/>
</dbReference>
<dbReference type="GO" id="GO:0003730">
    <property type="term" value="F:mRNA 3'-UTR binding"/>
    <property type="evidence" value="ECO:0000250"/>
    <property type="project" value="UniProtKB"/>
</dbReference>
<dbReference type="GO" id="GO:1990715">
    <property type="term" value="F:mRNA CDS binding"/>
    <property type="evidence" value="ECO:0000250"/>
    <property type="project" value="UniProtKB"/>
</dbReference>
<dbReference type="GO" id="GO:0097157">
    <property type="term" value="F:pre-mRNA intronic binding"/>
    <property type="evidence" value="ECO:0000250"/>
    <property type="project" value="UniProtKB"/>
</dbReference>
<dbReference type="GO" id="GO:1990825">
    <property type="term" value="F:sequence-specific mRNA binding"/>
    <property type="evidence" value="ECO:0000250"/>
    <property type="project" value="UniProtKB"/>
</dbReference>
<dbReference type="GO" id="GO:0061158">
    <property type="term" value="P:3'-UTR-mediated mRNA destabilization"/>
    <property type="evidence" value="ECO:0000250"/>
    <property type="project" value="UniProtKB"/>
</dbReference>
<dbReference type="GO" id="GO:0030154">
    <property type="term" value="P:cell differentiation"/>
    <property type="evidence" value="ECO:0007669"/>
    <property type="project" value="UniProtKB-KW"/>
</dbReference>
<dbReference type="GO" id="GO:0006974">
    <property type="term" value="P:DNA damage response"/>
    <property type="evidence" value="ECO:0000250"/>
    <property type="project" value="UniProtKB"/>
</dbReference>
<dbReference type="GO" id="GO:0061157">
    <property type="term" value="P:mRNA destabilization"/>
    <property type="evidence" value="ECO:0000250"/>
    <property type="project" value="UniProtKB"/>
</dbReference>
<dbReference type="GO" id="GO:0006397">
    <property type="term" value="P:mRNA processing"/>
    <property type="evidence" value="ECO:0007669"/>
    <property type="project" value="UniProtKB-KW"/>
</dbReference>
<dbReference type="GO" id="GO:0048255">
    <property type="term" value="P:mRNA stabilization"/>
    <property type="evidence" value="ECO:0000250"/>
    <property type="project" value="UniProtKB"/>
</dbReference>
<dbReference type="GO" id="GO:2000766">
    <property type="term" value="P:negative regulation of cytoplasmic translation"/>
    <property type="evidence" value="ECO:0000250"/>
    <property type="project" value="UniProtKB"/>
</dbReference>
<dbReference type="GO" id="GO:1905870">
    <property type="term" value="P:positive regulation of 3'-UTR-mediated mRNA stabilization"/>
    <property type="evidence" value="ECO:0000250"/>
    <property type="project" value="UniProtKB"/>
</dbReference>
<dbReference type="GO" id="GO:0045663">
    <property type="term" value="P:positive regulation of myoblast differentiation"/>
    <property type="evidence" value="ECO:0000250"/>
    <property type="project" value="UniProtKB"/>
</dbReference>
<dbReference type="GO" id="GO:0010831">
    <property type="term" value="P:positive regulation of myotube differentiation"/>
    <property type="evidence" value="ECO:0000250"/>
    <property type="project" value="UniProtKB"/>
</dbReference>
<dbReference type="GO" id="GO:1902811">
    <property type="term" value="P:positive regulation of skeletal muscle fiber differentiation"/>
    <property type="evidence" value="ECO:0000250"/>
    <property type="project" value="UniProtKB"/>
</dbReference>
<dbReference type="GO" id="GO:2000738">
    <property type="term" value="P:positive regulation of stem cell differentiation"/>
    <property type="evidence" value="ECO:0000250"/>
    <property type="project" value="UniProtKB"/>
</dbReference>
<dbReference type="GO" id="GO:0000381">
    <property type="term" value="P:regulation of alternative mRNA splicing, via spliceosome"/>
    <property type="evidence" value="ECO:0000250"/>
    <property type="project" value="UniProtKB"/>
</dbReference>
<dbReference type="GO" id="GO:0043488">
    <property type="term" value="P:regulation of mRNA stability"/>
    <property type="evidence" value="ECO:0000250"/>
    <property type="project" value="UniProtKB"/>
</dbReference>
<dbReference type="GO" id="GO:0010830">
    <property type="term" value="P:regulation of myotube differentiation"/>
    <property type="evidence" value="ECO:0000250"/>
    <property type="project" value="UniProtKB"/>
</dbReference>
<dbReference type="GO" id="GO:0008380">
    <property type="term" value="P:RNA splicing"/>
    <property type="evidence" value="ECO:0007669"/>
    <property type="project" value="UniProtKB-KW"/>
</dbReference>
<dbReference type="CDD" id="cd12384">
    <property type="entry name" value="RRM_RBM24_RBM38_like"/>
    <property type="match status" value="1"/>
</dbReference>
<dbReference type="FunFam" id="3.30.70.330:FF:000077">
    <property type="entry name" value="RNA-binding motif protein 24"/>
    <property type="match status" value="1"/>
</dbReference>
<dbReference type="Gene3D" id="3.30.70.330">
    <property type="match status" value="1"/>
</dbReference>
<dbReference type="InterPro" id="IPR012677">
    <property type="entry name" value="Nucleotide-bd_a/b_plait_sf"/>
</dbReference>
<dbReference type="InterPro" id="IPR035979">
    <property type="entry name" value="RBD_domain_sf"/>
</dbReference>
<dbReference type="InterPro" id="IPR050886">
    <property type="entry name" value="RNA-binding_reg"/>
</dbReference>
<dbReference type="InterPro" id="IPR000504">
    <property type="entry name" value="RRM_dom"/>
</dbReference>
<dbReference type="PANTHER" id="PTHR48024">
    <property type="entry name" value="GEO13361P1-RELATED"/>
    <property type="match status" value="1"/>
</dbReference>
<dbReference type="PANTHER" id="PTHR48024:SF10">
    <property type="entry name" value="RNA-BINDING PROTEIN 24"/>
    <property type="match status" value="1"/>
</dbReference>
<dbReference type="Pfam" id="PF00076">
    <property type="entry name" value="RRM_1"/>
    <property type="match status" value="1"/>
</dbReference>
<dbReference type="SMART" id="SM00360">
    <property type="entry name" value="RRM"/>
    <property type="match status" value="1"/>
</dbReference>
<dbReference type="SUPFAM" id="SSF54928">
    <property type="entry name" value="RNA-binding domain, RBD"/>
    <property type="match status" value="1"/>
</dbReference>
<dbReference type="PROSITE" id="PS50102">
    <property type="entry name" value="RRM"/>
    <property type="match status" value="1"/>
</dbReference>
<gene>
    <name type="primary">rbm24</name>
</gene>
<sequence length="226" mass="24136">MHTTQKDTTYTKIFVGGLPYHTTDSSLRKYFEVFGDIEEAVVITDRQTGKSRGYGFVTMADRAAAERACKDPNPIIDGRKANVNLAYLGAKPRIMQPGFAFGVQQIHPALIQRPFGIPAHYVYPHAFVQPGVVIPHVQQAAAASTSPYIDYTSAAYAQYSAAAAAAAAYDQYPYAASPATTGYVTTAGYGYAVPQPLTAAAPGTAAAAAAAFGQYQPQQLQADRMQ</sequence>
<keyword id="KW-0963">Cytoplasm</keyword>
<keyword id="KW-0221">Differentiation</keyword>
<keyword id="KW-0507">mRNA processing</keyword>
<keyword id="KW-0508">mRNA splicing</keyword>
<keyword id="KW-0539">Nucleus</keyword>
<keyword id="KW-1185">Reference proteome</keyword>
<keyword id="KW-0694">RNA-binding</keyword>
<keyword id="KW-0810">Translation regulation</keyword>
<comment type="function">
    <text evidence="1 3">Multifunctional RNA-binding protein involved in the regulation of pre-mRNA splicing, mRNA stability and mRNA translation important for cell fate decision and differentiation. Plays a major role in pre-mRNA alternative splicing regulation. Mediates preferentially muscle-specific exon inclusion in numerous mRNAs important for striated cardiac and skeletal muscle cell differentiation. Binds to intronic splicing enhancer (ISE) composed of stretches of GU-rich motifs localized in flanking intron of exon that will be included by alternative splicing. Involved in embryonic stem cell (ESC) transition to cardiac cell differentiation by promoting pre-mRNA alternative splicing events of several pluripotency and/or differentiation genes. Plays a role in the regulation of mRNA stability and mRNA translation to which it is bound. Involved in myogenic differentiation by regulating myog levels. Binds to a huge amount of mRNAs. Required for embryonic heart development, sarcomer and M-band formation in striated muscles.</text>
</comment>
<comment type="subcellular location">
    <subcellularLocation>
        <location evidence="2">Nucleus</location>
    </subcellularLocation>
    <subcellularLocation>
        <location evidence="1">Cytoplasm</location>
    </subcellularLocation>
</comment>
<comment type="domain">
    <text evidence="3">The RRM domain is necessary for mRNA stability and mRNA translation regulation.</text>
</comment>
<accession>Q6P8A7</accession>
<proteinExistence type="evidence at transcript level"/>
<name>RBM24_XENTR</name>
<protein>
    <recommendedName>
        <fullName evidence="5">RNA-binding protein 24</fullName>
    </recommendedName>
    <alternativeName>
        <fullName evidence="3">RNA-binding motif protein 24</fullName>
    </alternativeName>
</protein>